<keyword id="KW-0002">3D-structure</keyword>
<keyword id="KW-0016">Alginate biosynthesis</keyword>
<keyword id="KW-0238">DNA-binding</keyword>
<keyword id="KW-1185">Reference proteome</keyword>
<keyword id="KW-0731">Sigma factor</keyword>
<keyword id="KW-0804">Transcription</keyword>
<keyword id="KW-0805">Transcription regulation</keyword>
<reference key="1">
    <citation type="journal article" date="1993" name="J. Bacteriol.">
        <title>Characterization of a locus determining the mucoid status of Pseudomonas aeruginosa: AlgU shows sequence similarities with a Bacillus sigma factor.</title>
        <authorList>
            <person name="Martin D.W."/>
            <person name="Holloway B.W."/>
            <person name="Deretic V."/>
        </authorList>
    </citation>
    <scope>NUCLEOTIDE SEQUENCE [GENOMIC DNA]</scope>
</reference>
<reference key="2">
    <citation type="journal article" date="1993" name="Proc. Natl. Acad. Sci. U.S.A.">
        <title>Mechanism of conversion to mucoidy in Pseudomonas aeruginosa infecting cystic fibrosis patients.</title>
        <authorList>
            <person name="Martin D.W."/>
            <person name="Schurr M.J."/>
            <person name="Mudd M.H."/>
            <person name="Govan J.R.W."/>
            <person name="Holloway B.W."/>
            <person name="Deretic V."/>
        </authorList>
    </citation>
    <scope>NUCLEOTIDE SEQUENCE [GENOMIC DNA]</scope>
    <source>
        <strain>PAO381</strain>
        <strain>PAO568</strain>
    </source>
</reference>
<reference key="3">
    <citation type="journal article" date="1994" name="J. Bacteriol.">
        <title>Mucoid-to-nonmucoid conversion in alginate-producing Pseudomonas aeruginosa often results from spontaneous mutations in algT, encoding a putative alternate sigma factor, and shows evidence for autoregulation.</title>
        <authorList>
            <person name="Devries C.A."/>
            <person name="Ohman D.E."/>
        </authorList>
    </citation>
    <scope>NUCLEOTIDE SEQUENCE [GENOMIC DNA]</scope>
    <source>
        <strain>FRD1</strain>
    </source>
</reference>
<reference key="4">
    <citation type="journal article" date="2000" name="Nature">
        <title>Complete genome sequence of Pseudomonas aeruginosa PAO1, an opportunistic pathogen.</title>
        <authorList>
            <person name="Stover C.K."/>
            <person name="Pham X.-Q.T."/>
            <person name="Erwin A.L."/>
            <person name="Mizoguchi S.D."/>
            <person name="Warrener P."/>
            <person name="Hickey M.J."/>
            <person name="Brinkman F.S.L."/>
            <person name="Hufnagle W.O."/>
            <person name="Kowalik D.J."/>
            <person name="Lagrou M."/>
            <person name="Garber R.L."/>
            <person name="Goltry L."/>
            <person name="Tolentino E."/>
            <person name="Westbrock-Wadman S."/>
            <person name="Yuan Y."/>
            <person name="Brody L.L."/>
            <person name="Coulter S.N."/>
            <person name="Folger K.R."/>
            <person name="Kas A."/>
            <person name="Larbig K."/>
            <person name="Lim R.M."/>
            <person name="Smith K.A."/>
            <person name="Spencer D.H."/>
            <person name="Wong G.K.-S."/>
            <person name="Wu Z."/>
            <person name="Paulsen I.T."/>
            <person name="Reizer J."/>
            <person name="Saier M.H. Jr."/>
            <person name="Hancock R.E.W."/>
            <person name="Lory S."/>
            <person name="Olson M.V."/>
        </authorList>
    </citation>
    <scope>NUCLEOTIDE SEQUENCE [LARGE SCALE GENOMIC DNA]</scope>
    <source>
        <strain>ATCC 15692 / DSM 22644 / CIP 104116 / JCM 14847 / LMG 12228 / 1C / PRS 101 / PAO1</strain>
    </source>
</reference>
<reference key="5">
    <citation type="journal article" date="1995" name="Gene">
        <title>Genetic linkage in Pseudomonas aeruginosa of algT and nadB: mutation in nadB does not affect NAD biosynthesis or alginate production.</title>
        <authorList>
            <person name="DeVries C.A."/>
            <person name="Hassett D.J."/>
            <person name="Flynn J.L."/>
            <person name="Ohman D.E."/>
        </authorList>
    </citation>
    <scope>NUCLEOTIDE SEQUENCE [GENOMIC DNA] OF 1-13</scope>
    <source>
        <strain>FRD1</strain>
    </source>
</reference>
<dbReference type="EMBL" id="U49151">
    <property type="protein sequence ID" value="AAC43714.1"/>
    <property type="molecule type" value="Genomic_DNA"/>
</dbReference>
<dbReference type="EMBL" id="L14760">
    <property type="protein sequence ID" value="AAA87628.1"/>
    <property type="molecule type" value="Genomic_DNA"/>
</dbReference>
<dbReference type="EMBL" id="L14761">
    <property type="protein sequence ID" value="AAA87631.1"/>
    <property type="molecule type" value="Genomic_DNA"/>
</dbReference>
<dbReference type="EMBL" id="L36379">
    <property type="protein sequence ID" value="AAA64439.1"/>
    <property type="molecule type" value="Genomic_DNA"/>
</dbReference>
<dbReference type="EMBL" id="AE004091">
    <property type="protein sequence ID" value="AAG04151.1"/>
    <property type="molecule type" value="Genomic_DNA"/>
</dbReference>
<dbReference type="EMBL" id="U17232">
    <property type="protein sequence ID" value="AAA92355.1"/>
    <property type="molecule type" value="Genomic_DNA"/>
</dbReference>
<dbReference type="PIR" id="A49704">
    <property type="entry name" value="A49704"/>
</dbReference>
<dbReference type="RefSeq" id="NP_249453.1">
    <property type="nucleotide sequence ID" value="NC_002516.2"/>
</dbReference>
<dbReference type="PDB" id="6IN7">
    <property type="method" value="X-ray"/>
    <property type="resolution" value="1.96 A"/>
    <property type="chains" value="B=1-193"/>
</dbReference>
<dbReference type="PDB" id="8Z6G">
    <property type="method" value="X-ray"/>
    <property type="resolution" value="2.10 A"/>
    <property type="chains" value="B/D/F=1-193"/>
</dbReference>
<dbReference type="PDBsum" id="6IN7"/>
<dbReference type="PDBsum" id="8Z6G"/>
<dbReference type="SMR" id="Q06198"/>
<dbReference type="FunCoup" id="Q06198">
    <property type="interactions" value="327"/>
</dbReference>
<dbReference type="STRING" id="208964.PA0762"/>
<dbReference type="PaxDb" id="208964-PA0762"/>
<dbReference type="DNASU" id="882125"/>
<dbReference type="GeneID" id="882125"/>
<dbReference type="KEGG" id="pae:PA0762"/>
<dbReference type="PATRIC" id="fig|208964.12.peg.792"/>
<dbReference type="PseudoCAP" id="PA0762"/>
<dbReference type="HOGENOM" id="CLU_047691_3_0_6"/>
<dbReference type="InParanoid" id="Q06198"/>
<dbReference type="OrthoDB" id="9780326at2"/>
<dbReference type="PhylomeDB" id="Q06198"/>
<dbReference type="BioCyc" id="PAER208964:G1FZ6-775-MONOMER"/>
<dbReference type="PHI-base" id="PHI:8159"/>
<dbReference type="Proteomes" id="UP000002438">
    <property type="component" value="Chromosome"/>
</dbReference>
<dbReference type="GO" id="GO:0000345">
    <property type="term" value="C:cytosolic DNA-directed RNA polymerase complex"/>
    <property type="evidence" value="ECO:0000314"/>
    <property type="project" value="PseudoCAP"/>
</dbReference>
<dbReference type="GO" id="GO:0032993">
    <property type="term" value="C:protein-DNA complex"/>
    <property type="evidence" value="ECO:0000315"/>
    <property type="project" value="CollecTF"/>
</dbReference>
<dbReference type="GO" id="GO:0001216">
    <property type="term" value="F:DNA-binding transcription activator activity"/>
    <property type="evidence" value="ECO:0000315"/>
    <property type="project" value="CollecTF"/>
</dbReference>
<dbReference type="GO" id="GO:0016987">
    <property type="term" value="F:sigma factor activity"/>
    <property type="evidence" value="ECO:0000314"/>
    <property type="project" value="PseudoCAP"/>
</dbReference>
<dbReference type="GO" id="GO:0000976">
    <property type="term" value="F:transcription cis-regulatory region binding"/>
    <property type="evidence" value="ECO:0000315"/>
    <property type="project" value="CollecTF"/>
</dbReference>
<dbReference type="GO" id="GO:0042121">
    <property type="term" value="P:alginic acid biosynthetic process"/>
    <property type="evidence" value="ECO:0007669"/>
    <property type="project" value="UniProtKB-KW"/>
</dbReference>
<dbReference type="GO" id="GO:0071236">
    <property type="term" value="P:cellular response to antibiotic"/>
    <property type="evidence" value="ECO:0000315"/>
    <property type="project" value="PseudoCAP"/>
</dbReference>
<dbReference type="GO" id="GO:0036460">
    <property type="term" value="P:cellular response to cell envelope stress"/>
    <property type="evidence" value="ECO:0000314"/>
    <property type="project" value="PseudoCAP"/>
</dbReference>
<dbReference type="GO" id="GO:0006352">
    <property type="term" value="P:DNA-templated transcription initiation"/>
    <property type="evidence" value="ECO:0007669"/>
    <property type="project" value="InterPro"/>
</dbReference>
<dbReference type="GO" id="GO:1902201">
    <property type="term" value="P:negative regulation of bacterial-type flagellum-dependent cell motility"/>
    <property type="evidence" value="ECO:0000315"/>
    <property type="project" value="PseudoCAP"/>
</dbReference>
<dbReference type="GO" id="GO:1900189">
    <property type="term" value="P:positive regulation of cell adhesion involved in single-species biofilm formation"/>
    <property type="evidence" value="ECO:0000315"/>
    <property type="project" value="PseudoCAP"/>
</dbReference>
<dbReference type="GO" id="GO:1900036">
    <property type="term" value="P:positive regulation of cellular response to heat"/>
    <property type="evidence" value="ECO:0000314"/>
    <property type="project" value="PseudoCAP"/>
</dbReference>
<dbReference type="GO" id="GO:0045893">
    <property type="term" value="P:positive regulation of DNA-templated transcription"/>
    <property type="evidence" value="ECO:0000270"/>
    <property type="project" value="CollecTF"/>
</dbReference>
<dbReference type="GO" id="GO:1902884">
    <property type="term" value="P:positive regulation of response to oxidative stress"/>
    <property type="evidence" value="ECO:0000315"/>
    <property type="project" value="PseudoCAP"/>
</dbReference>
<dbReference type="GO" id="GO:1900233">
    <property type="term" value="P:positive regulation of single-species biofilm formation on inanimate substrate"/>
    <property type="evidence" value="ECO:0000315"/>
    <property type="project" value="PseudoCAP"/>
</dbReference>
<dbReference type="GO" id="GO:0006355">
    <property type="term" value="P:regulation of DNA-templated transcription"/>
    <property type="evidence" value="ECO:0000318"/>
    <property type="project" value="GO_Central"/>
</dbReference>
<dbReference type="GO" id="GO:0032885">
    <property type="term" value="P:regulation of polysaccharide biosynthetic process"/>
    <property type="evidence" value="ECO:0000315"/>
    <property type="project" value="PseudoCAP"/>
</dbReference>
<dbReference type="CDD" id="cd06171">
    <property type="entry name" value="Sigma70_r4"/>
    <property type="match status" value="1"/>
</dbReference>
<dbReference type="FunFam" id="1.10.10.10:FF:000043">
    <property type="entry name" value="RNA polymerase sigma factor"/>
    <property type="match status" value="1"/>
</dbReference>
<dbReference type="FunFam" id="1.10.1740.10:FF:000001">
    <property type="entry name" value="RNA polymerase sigma factor"/>
    <property type="match status" value="1"/>
</dbReference>
<dbReference type="Gene3D" id="1.10.1740.10">
    <property type="match status" value="1"/>
</dbReference>
<dbReference type="Gene3D" id="1.10.10.10">
    <property type="entry name" value="Winged helix-like DNA-binding domain superfamily/Winged helix DNA-binding domain"/>
    <property type="match status" value="1"/>
</dbReference>
<dbReference type="InterPro" id="IPR039425">
    <property type="entry name" value="RNA_pol_sigma-70-like"/>
</dbReference>
<dbReference type="InterPro" id="IPR014284">
    <property type="entry name" value="RNA_pol_sigma-70_dom"/>
</dbReference>
<dbReference type="InterPro" id="IPR000838">
    <property type="entry name" value="RNA_pol_sigma70_ECF_CS"/>
</dbReference>
<dbReference type="InterPro" id="IPR007627">
    <property type="entry name" value="RNA_pol_sigma70_r2"/>
</dbReference>
<dbReference type="InterPro" id="IPR013249">
    <property type="entry name" value="RNA_pol_sigma70_r4_t2"/>
</dbReference>
<dbReference type="InterPro" id="IPR014286">
    <property type="entry name" value="RNA_pol_sigma70_RpoE"/>
</dbReference>
<dbReference type="InterPro" id="IPR013325">
    <property type="entry name" value="RNA_pol_sigma_r2"/>
</dbReference>
<dbReference type="InterPro" id="IPR013324">
    <property type="entry name" value="RNA_pol_sigma_r3/r4-like"/>
</dbReference>
<dbReference type="InterPro" id="IPR036388">
    <property type="entry name" value="WH-like_DNA-bd_sf"/>
</dbReference>
<dbReference type="NCBIfam" id="TIGR02939">
    <property type="entry name" value="RpoE_Sigma70"/>
    <property type="match status" value="1"/>
</dbReference>
<dbReference type="NCBIfam" id="TIGR02937">
    <property type="entry name" value="sigma70-ECF"/>
    <property type="match status" value="1"/>
</dbReference>
<dbReference type="PANTHER" id="PTHR43133:SF53">
    <property type="entry name" value="ECF RNA POLYMERASE SIGMA-E FACTOR"/>
    <property type="match status" value="1"/>
</dbReference>
<dbReference type="PANTHER" id="PTHR43133">
    <property type="entry name" value="RNA POLYMERASE ECF-TYPE SIGMA FACTO"/>
    <property type="match status" value="1"/>
</dbReference>
<dbReference type="Pfam" id="PF04542">
    <property type="entry name" value="Sigma70_r2"/>
    <property type="match status" value="1"/>
</dbReference>
<dbReference type="Pfam" id="PF08281">
    <property type="entry name" value="Sigma70_r4_2"/>
    <property type="match status" value="1"/>
</dbReference>
<dbReference type="SUPFAM" id="SSF88946">
    <property type="entry name" value="Sigma2 domain of RNA polymerase sigma factors"/>
    <property type="match status" value="1"/>
</dbReference>
<dbReference type="SUPFAM" id="SSF88659">
    <property type="entry name" value="Sigma3 and sigma4 domains of RNA polymerase sigma factors"/>
    <property type="match status" value="1"/>
</dbReference>
<dbReference type="PROSITE" id="PS01063">
    <property type="entry name" value="SIGMA70_ECF"/>
    <property type="match status" value="1"/>
</dbReference>
<organism>
    <name type="scientific">Pseudomonas aeruginosa (strain ATCC 15692 / DSM 22644 / CIP 104116 / JCM 14847 / LMG 12228 / 1C / PRS 101 / PAO1)</name>
    <dbReference type="NCBI Taxonomy" id="208964"/>
    <lineage>
        <taxon>Bacteria</taxon>
        <taxon>Pseudomonadati</taxon>
        <taxon>Pseudomonadota</taxon>
        <taxon>Gammaproteobacteria</taxon>
        <taxon>Pseudomonadales</taxon>
        <taxon>Pseudomonadaceae</taxon>
        <taxon>Pseudomonas</taxon>
    </lineage>
</organism>
<sequence length="193" mass="22196">MLTQEQDQQLVERVQRGDKRAFDLLVLKYQHKILGLIVRFVHDAQEAQDVAQEAFIKAYRALGNFRGDSAFYTWLYRIAINTAKNHLVARGRRPPDSDVTAEDAEFFEGDHALKDIESPERAMLRDEIEATVHQTIQQLPEDLRTALTLREFEGLSYEDIATVMQCPVGTVRSRIFRAREAIDKALQPLLREA</sequence>
<proteinExistence type="evidence at protein level"/>
<accession>Q06198</accession>
<accession>Q6LCW4</accession>
<name>RPSH_PSEAE</name>
<feature type="chain" id="PRO_0000094007" description="RNA polymerase sigma-H factor">
    <location>
        <begin position="1"/>
        <end position="193"/>
    </location>
</feature>
<feature type="DNA-binding region" description="H-T-H motif" evidence="1">
    <location>
        <begin position="157"/>
        <end position="176"/>
    </location>
</feature>
<feature type="short sequence motif" description="Polymerase core binding">
    <location>
        <begin position="49"/>
        <end position="62"/>
    </location>
</feature>
<feature type="helix" evidence="3">
    <location>
        <begin position="8"/>
        <end position="14"/>
    </location>
</feature>
<feature type="turn" evidence="3">
    <location>
        <begin position="15"/>
        <end position="17"/>
    </location>
</feature>
<feature type="helix" evidence="3">
    <location>
        <begin position="19"/>
        <end position="41"/>
    </location>
</feature>
<feature type="helix" evidence="3">
    <location>
        <begin position="44"/>
        <end position="60"/>
    </location>
</feature>
<feature type="helix" evidence="3">
    <location>
        <begin position="61"/>
        <end position="64"/>
    </location>
</feature>
<feature type="strand" evidence="3">
    <location>
        <begin position="67"/>
        <end position="69"/>
    </location>
</feature>
<feature type="helix" evidence="3">
    <location>
        <begin position="71"/>
        <end position="90"/>
    </location>
</feature>
<feature type="helix" evidence="3">
    <location>
        <begin position="111"/>
        <end position="116"/>
    </location>
</feature>
<feature type="helix" evidence="3">
    <location>
        <begin position="119"/>
        <end position="137"/>
    </location>
</feature>
<feature type="helix" evidence="3">
    <location>
        <begin position="141"/>
        <end position="151"/>
    </location>
</feature>
<feature type="helix" evidence="3">
    <location>
        <begin position="157"/>
        <end position="164"/>
    </location>
</feature>
<feature type="helix" evidence="3">
    <location>
        <begin position="168"/>
        <end position="186"/>
    </location>
</feature>
<feature type="helix" evidence="3">
    <location>
        <begin position="187"/>
        <end position="189"/>
    </location>
</feature>
<protein>
    <recommendedName>
        <fullName>RNA polymerase sigma-H factor</fullName>
    </recommendedName>
    <alternativeName>
        <fullName>Sigma-30</fullName>
    </alternativeName>
</protein>
<gene>
    <name type="primary">algU</name>
    <name type="synonym">algT</name>
    <name type="ordered locus">PA0762</name>
</gene>
<evidence type="ECO:0000250" key="1"/>
<evidence type="ECO:0000305" key="2"/>
<evidence type="ECO:0007829" key="3">
    <source>
        <dbReference type="PDB" id="6IN7"/>
    </source>
</evidence>
<comment type="function">
    <text>Sigma factors are initiation factors that promote the attachment of RNA polymerase to specific initiation sites and are then released. This sigma factor regulates genes such as algD, involved in alginate biosynthesis.</text>
</comment>
<comment type="similarity">
    <text evidence="2">Belongs to the sigma-70 factor family. ECF subfamily.</text>
</comment>